<feature type="signal peptide" evidence="1">
    <location>
        <begin position="1"/>
        <end position="34"/>
    </location>
</feature>
<feature type="chain" id="PRO_0000014149" description="Uncharacterized protein Rv2929">
    <location>
        <begin position="35"/>
        <end position="103"/>
    </location>
</feature>
<feature type="region of interest" description="Disordered" evidence="2">
    <location>
        <begin position="1"/>
        <end position="20"/>
    </location>
</feature>
<feature type="region of interest" description="Disordered" evidence="2">
    <location>
        <begin position="44"/>
        <end position="71"/>
    </location>
</feature>
<dbReference type="EMBL" id="AL123456">
    <property type="protein sequence ID" value="CCP45732.1"/>
    <property type="molecule type" value="Genomic_DNA"/>
</dbReference>
<dbReference type="PIR" id="A70749">
    <property type="entry name" value="A70749"/>
</dbReference>
<dbReference type="RefSeq" id="NP_217445.1">
    <property type="nucleotide sequence ID" value="NC_000962.3"/>
</dbReference>
<dbReference type="RefSeq" id="WP_003900596.1">
    <property type="nucleotide sequence ID" value="NZ_NVQJ01000006.1"/>
</dbReference>
<dbReference type="STRING" id="83332.Rv2929"/>
<dbReference type="PaxDb" id="83332-Rv2929"/>
<dbReference type="GeneID" id="888112"/>
<dbReference type="KEGG" id="mtu:Rv2929"/>
<dbReference type="KEGG" id="mtv:RVBD_2929"/>
<dbReference type="TubercuList" id="Rv2929"/>
<dbReference type="InParanoid" id="P9WL13"/>
<dbReference type="OrthoDB" id="9876954at2"/>
<dbReference type="Proteomes" id="UP000001584">
    <property type="component" value="Chromosome"/>
</dbReference>
<dbReference type="GO" id="GO:0051701">
    <property type="term" value="P:biological process involved in interaction with host"/>
    <property type="evidence" value="ECO:0000315"/>
    <property type="project" value="MTBBASE"/>
</dbReference>
<reference key="1">
    <citation type="journal article" date="1998" name="Nature">
        <title>Deciphering the biology of Mycobacterium tuberculosis from the complete genome sequence.</title>
        <authorList>
            <person name="Cole S.T."/>
            <person name="Brosch R."/>
            <person name="Parkhill J."/>
            <person name="Garnier T."/>
            <person name="Churcher C.M."/>
            <person name="Harris D.E."/>
            <person name="Gordon S.V."/>
            <person name="Eiglmeier K."/>
            <person name="Gas S."/>
            <person name="Barry C.E. III"/>
            <person name="Tekaia F."/>
            <person name="Badcock K."/>
            <person name="Basham D."/>
            <person name="Brown D."/>
            <person name="Chillingworth T."/>
            <person name="Connor R."/>
            <person name="Davies R.M."/>
            <person name="Devlin K."/>
            <person name="Feltwell T."/>
            <person name="Gentles S."/>
            <person name="Hamlin N."/>
            <person name="Holroyd S."/>
            <person name="Hornsby T."/>
            <person name="Jagels K."/>
            <person name="Krogh A."/>
            <person name="McLean J."/>
            <person name="Moule S."/>
            <person name="Murphy L.D."/>
            <person name="Oliver S."/>
            <person name="Osborne J."/>
            <person name="Quail M.A."/>
            <person name="Rajandream M.A."/>
            <person name="Rogers J."/>
            <person name="Rutter S."/>
            <person name="Seeger K."/>
            <person name="Skelton S."/>
            <person name="Squares S."/>
            <person name="Squares R."/>
            <person name="Sulston J.E."/>
            <person name="Taylor K."/>
            <person name="Whitehead S."/>
            <person name="Barrell B.G."/>
        </authorList>
    </citation>
    <scope>NUCLEOTIDE SEQUENCE [LARGE SCALE GENOMIC DNA]</scope>
    <source>
        <strain>ATCC 25618 / H37Rv</strain>
    </source>
</reference>
<protein>
    <recommendedName>
        <fullName>Uncharacterized protein Rv2929</fullName>
    </recommendedName>
</protein>
<name>Y2929_MYCTU</name>
<proteinExistence type="inferred from homology"/>
<accession>P9WL13</accession>
<accession>L0TDZ4</accession>
<accession>P65061</accession>
<accession>Q10975</accession>
<sequence>MIELSYAPDVAGRRSNWPKGSGVNTWTAIRWTFAEDSPYVGTGLERMASDTHGGGGGRPVTPPPPGMHHLGCSRGVLLISSQRDAGHKTCDPAAGGTLTSVLT</sequence>
<keyword id="KW-1185">Reference proteome</keyword>
<keyword id="KW-0732">Signal</keyword>
<organism>
    <name type="scientific">Mycobacterium tuberculosis (strain ATCC 25618 / H37Rv)</name>
    <dbReference type="NCBI Taxonomy" id="83332"/>
    <lineage>
        <taxon>Bacteria</taxon>
        <taxon>Bacillati</taxon>
        <taxon>Actinomycetota</taxon>
        <taxon>Actinomycetes</taxon>
        <taxon>Mycobacteriales</taxon>
        <taxon>Mycobacteriaceae</taxon>
        <taxon>Mycobacterium</taxon>
        <taxon>Mycobacterium tuberculosis complex</taxon>
    </lineage>
</organism>
<gene>
    <name type="ordered locus">Rv2929</name>
    <name type="ORF">MTCY338.18</name>
</gene>
<evidence type="ECO:0000255" key="1"/>
<evidence type="ECO:0000256" key="2">
    <source>
        <dbReference type="SAM" id="MobiDB-lite"/>
    </source>
</evidence>